<accession>Q35925</accession>
<accession>Q36803</accession>
<organism>
    <name type="scientific">Salmo salar</name>
    <name type="common">Atlantic salmon</name>
    <dbReference type="NCBI Taxonomy" id="8030"/>
    <lineage>
        <taxon>Eukaryota</taxon>
        <taxon>Metazoa</taxon>
        <taxon>Chordata</taxon>
        <taxon>Craniata</taxon>
        <taxon>Vertebrata</taxon>
        <taxon>Euteleostomi</taxon>
        <taxon>Actinopterygii</taxon>
        <taxon>Neopterygii</taxon>
        <taxon>Teleostei</taxon>
        <taxon>Protacanthopterygii</taxon>
        <taxon>Salmoniformes</taxon>
        <taxon>Salmonidae</taxon>
        <taxon>Salmoninae</taxon>
        <taxon>Salmo</taxon>
    </lineage>
</organism>
<geneLocation type="mitochondrion"/>
<protein>
    <recommendedName>
        <fullName>Cytochrome b</fullName>
    </recommendedName>
    <alternativeName>
        <fullName>Complex III subunit 3</fullName>
    </alternativeName>
    <alternativeName>
        <fullName>Complex III subunit III</fullName>
    </alternativeName>
    <alternativeName>
        <fullName>Cytochrome b-c1 complex subunit 3</fullName>
    </alternativeName>
    <alternativeName>
        <fullName>Ubiquinol-cytochrome-c reductase complex cytochrome b subunit</fullName>
    </alternativeName>
</protein>
<sequence>MANLRKTHPLLKIANDALVDLPAPSNISVWWNFGSLLGLCLATQILTGLFLAMHYTSDISTAFSSVCHICRDVSYGWLIRNIHANGASFFFICIYMHIARGLYYGSYLYKETWNIGVVLLLLTMMTAFVGYVLPWGQMSFWGATVITNLLSAVPYVGGALVQWIWGGFSVDNATLTRFFAFHFLFPFVIAAATVLHLLFLHETGSNNPAGINSDADKISFHPYFSYKDLLGFVAMLLGLTSLALFAPNLLGDPDNFTPANPLVTPPHIKPEWYFLFAYAILRSIPNKLGGVLALLFSILVLMVVPILHTSKQRGLTFRPLTQFLFWTLVADMLILTWIGGMPVEHPFIIIGQIASVIYFTIFLVLAPLAGWAENKALEWT</sequence>
<feature type="chain" id="PRO_0000061514" description="Cytochrome b">
    <location>
        <begin position="1"/>
        <end position="380"/>
    </location>
</feature>
<feature type="transmembrane region" description="Helical" evidence="2">
    <location>
        <begin position="33"/>
        <end position="53"/>
    </location>
</feature>
<feature type="transmembrane region" description="Helical" evidence="2">
    <location>
        <begin position="77"/>
        <end position="98"/>
    </location>
</feature>
<feature type="transmembrane region" description="Helical" evidence="2">
    <location>
        <begin position="113"/>
        <end position="133"/>
    </location>
</feature>
<feature type="transmembrane region" description="Helical" evidence="2">
    <location>
        <begin position="178"/>
        <end position="198"/>
    </location>
</feature>
<feature type="transmembrane region" description="Helical" evidence="2">
    <location>
        <begin position="226"/>
        <end position="246"/>
    </location>
</feature>
<feature type="transmembrane region" description="Helical" evidence="2">
    <location>
        <begin position="288"/>
        <end position="308"/>
    </location>
</feature>
<feature type="transmembrane region" description="Helical" evidence="2">
    <location>
        <begin position="320"/>
        <end position="340"/>
    </location>
</feature>
<feature type="transmembrane region" description="Helical" evidence="2">
    <location>
        <begin position="347"/>
        <end position="367"/>
    </location>
</feature>
<feature type="binding site" description="axial binding residue" evidence="2">
    <location>
        <position position="83"/>
    </location>
    <ligand>
        <name>heme b</name>
        <dbReference type="ChEBI" id="CHEBI:60344"/>
        <label>b562</label>
    </ligand>
    <ligandPart>
        <name>Fe</name>
        <dbReference type="ChEBI" id="CHEBI:18248"/>
    </ligandPart>
</feature>
<feature type="binding site" description="axial binding residue" evidence="2">
    <location>
        <position position="97"/>
    </location>
    <ligand>
        <name>heme b</name>
        <dbReference type="ChEBI" id="CHEBI:60344"/>
        <label>b566</label>
    </ligand>
    <ligandPart>
        <name>Fe</name>
        <dbReference type="ChEBI" id="CHEBI:18248"/>
    </ligandPart>
</feature>
<feature type="binding site" description="axial binding residue" evidence="2">
    <location>
        <position position="182"/>
    </location>
    <ligand>
        <name>heme b</name>
        <dbReference type="ChEBI" id="CHEBI:60344"/>
        <label>b562</label>
    </ligand>
    <ligandPart>
        <name>Fe</name>
        <dbReference type="ChEBI" id="CHEBI:18248"/>
    </ligandPart>
</feature>
<feature type="binding site" description="axial binding residue" evidence="2">
    <location>
        <position position="196"/>
    </location>
    <ligand>
        <name>heme b</name>
        <dbReference type="ChEBI" id="CHEBI:60344"/>
        <label>b566</label>
    </ligand>
    <ligandPart>
        <name>Fe</name>
        <dbReference type="ChEBI" id="CHEBI:18248"/>
    </ligandPart>
</feature>
<feature type="binding site" evidence="2">
    <location>
        <position position="201"/>
    </location>
    <ligand>
        <name>a ubiquinone</name>
        <dbReference type="ChEBI" id="CHEBI:16389"/>
    </ligand>
</feature>
<reference key="1">
    <citation type="journal article" date="1999" name="Gene">
        <title>The complete mitochondrial DNA sequence of the Atlantic salmon, Salmo salar.</title>
        <authorList>
            <person name="Hurst C.D."/>
            <person name="Bartlett S.E."/>
            <person name="Davidson W.S."/>
            <person name="Bruce I.J."/>
        </authorList>
    </citation>
    <scope>NUCLEOTIDE SEQUENCE [GENOMIC DNA]</scope>
    <source>
        <tissue>Liver</tissue>
    </source>
</reference>
<reference key="2">
    <citation type="submission" date="1999-03" db="EMBL/GenBank/DDBJ databases">
        <title>The complete mitochondrial genome sequence of a teleost, Salmo salar, and comparisons with other salmoniformes.</title>
        <authorList>
            <person name="Arnason U."/>
            <person name="Johnsson E."/>
            <person name="Rasmussen A.S."/>
        </authorList>
    </citation>
    <scope>NUCLEOTIDE SEQUENCE [GENOMIC DNA]</scope>
</reference>
<reference key="3">
    <citation type="journal article" date="1994" name="Mol. Phylogenet. Evol.">
        <title>Cytochrome b and 16S rRNA sequence variation in the Salmo trutta (Salmonidae, Teleostei) species complex.</title>
        <authorList>
            <person name="Patarnello T."/>
            <person name="Bargelloni L."/>
            <person name="Caldara F."/>
            <person name="Colombo L."/>
        </authorList>
    </citation>
    <scope>NUCLEOTIDE SEQUENCE [GENOMIC DNA] OF 5-87</scope>
    <source>
        <tissue>Muscle</tissue>
    </source>
</reference>
<evidence type="ECO:0000250" key="1"/>
<evidence type="ECO:0000250" key="2">
    <source>
        <dbReference type="UniProtKB" id="P00157"/>
    </source>
</evidence>
<evidence type="ECO:0000255" key="3">
    <source>
        <dbReference type="PROSITE-ProRule" id="PRU00967"/>
    </source>
</evidence>
<evidence type="ECO:0000255" key="4">
    <source>
        <dbReference type="PROSITE-ProRule" id="PRU00968"/>
    </source>
</evidence>
<gene>
    <name type="primary">mt-cyb</name>
    <name type="synonym">cob</name>
    <name type="synonym">cytb</name>
    <name type="synonym">mtcyb</name>
</gene>
<proteinExistence type="inferred from homology"/>
<dbReference type="EMBL" id="U12143">
    <property type="protein sequence ID" value="AAD04745.1"/>
    <property type="molecule type" value="Genomic_DNA"/>
</dbReference>
<dbReference type="EMBL" id="AF133701">
    <property type="protein sequence ID" value="AAF61390.1"/>
    <property type="molecule type" value="Genomic_DNA"/>
</dbReference>
<dbReference type="EMBL" id="X77525">
    <property type="protein sequence ID" value="CAA54660.1"/>
    <property type="molecule type" value="Genomic_DNA"/>
</dbReference>
<dbReference type="PIR" id="T09959">
    <property type="entry name" value="T09959"/>
</dbReference>
<dbReference type="RefSeq" id="NP_008457.1">
    <property type="nucleotide sequence ID" value="NC_001960.1"/>
</dbReference>
<dbReference type="SMR" id="Q35925"/>
<dbReference type="STRING" id="8030.ENSSSAP00000000014"/>
<dbReference type="PaxDb" id="8030-ENSSSAP00000000014"/>
<dbReference type="GeneID" id="808306"/>
<dbReference type="KEGG" id="sasa:808306"/>
<dbReference type="CTD" id="4519"/>
<dbReference type="Proteomes" id="UP000087266">
    <property type="component" value="Mitochondrion MT"/>
</dbReference>
<dbReference type="Bgee" id="ENSSSAG00000000036">
    <property type="expression patterns" value="Expressed in heart and 25 other cell types or tissues"/>
</dbReference>
<dbReference type="GO" id="GO:0005743">
    <property type="term" value="C:mitochondrial inner membrane"/>
    <property type="evidence" value="ECO:0007669"/>
    <property type="project" value="UniProtKB-SubCell"/>
</dbReference>
<dbReference type="GO" id="GO:0045275">
    <property type="term" value="C:respiratory chain complex III"/>
    <property type="evidence" value="ECO:0007669"/>
    <property type="project" value="InterPro"/>
</dbReference>
<dbReference type="GO" id="GO:0046872">
    <property type="term" value="F:metal ion binding"/>
    <property type="evidence" value="ECO:0007669"/>
    <property type="project" value="UniProtKB-KW"/>
</dbReference>
<dbReference type="GO" id="GO:0008121">
    <property type="term" value="F:ubiquinol-cytochrome-c reductase activity"/>
    <property type="evidence" value="ECO:0007669"/>
    <property type="project" value="InterPro"/>
</dbReference>
<dbReference type="GO" id="GO:0006122">
    <property type="term" value="P:mitochondrial electron transport, ubiquinol to cytochrome c"/>
    <property type="evidence" value="ECO:0007669"/>
    <property type="project" value="TreeGrafter"/>
</dbReference>
<dbReference type="CDD" id="cd00290">
    <property type="entry name" value="cytochrome_b_C"/>
    <property type="match status" value="1"/>
</dbReference>
<dbReference type="CDD" id="cd00284">
    <property type="entry name" value="Cytochrome_b_N"/>
    <property type="match status" value="1"/>
</dbReference>
<dbReference type="FunFam" id="1.20.810.10:FF:000002">
    <property type="entry name" value="Cytochrome b"/>
    <property type="match status" value="1"/>
</dbReference>
<dbReference type="Gene3D" id="1.20.810.10">
    <property type="entry name" value="Cytochrome Bc1 Complex, Chain C"/>
    <property type="match status" value="1"/>
</dbReference>
<dbReference type="InterPro" id="IPR005798">
    <property type="entry name" value="Cyt_b/b6_C"/>
</dbReference>
<dbReference type="InterPro" id="IPR036150">
    <property type="entry name" value="Cyt_b/b6_C_sf"/>
</dbReference>
<dbReference type="InterPro" id="IPR005797">
    <property type="entry name" value="Cyt_b/b6_N"/>
</dbReference>
<dbReference type="InterPro" id="IPR027387">
    <property type="entry name" value="Cytb/b6-like_sf"/>
</dbReference>
<dbReference type="InterPro" id="IPR030689">
    <property type="entry name" value="Cytochrome_b"/>
</dbReference>
<dbReference type="InterPro" id="IPR048260">
    <property type="entry name" value="Cytochrome_b_C_euk/bac"/>
</dbReference>
<dbReference type="InterPro" id="IPR048259">
    <property type="entry name" value="Cytochrome_b_N_euk/bac"/>
</dbReference>
<dbReference type="InterPro" id="IPR016174">
    <property type="entry name" value="Di-haem_cyt_TM"/>
</dbReference>
<dbReference type="PANTHER" id="PTHR19271">
    <property type="entry name" value="CYTOCHROME B"/>
    <property type="match status" value="1"/>
</dbReference>
<dbReference type="PANTHER" id="PTHR19271:SF16">
    <property type="entry name" value="CYTOCHROME B"/>
    <property type="match status" value="1"/>
</dbReference>
<dbReference type="Pfam" id="PF00032">
    <property type="entry name" value="Cytochrom_B_C"/>
    <property type="match status" value="1"/>
</dbReference>
<dbReference type="Pfam" id="PF00033">
    <property type="entry name" value="Cytochrome_B"/>
    <property type="match status" value="1"/>
</dbReference>
<dbReference type="PIRSF" id="PIRSF038885">
    <property type="entry name" value="COB"/>
    <property type="match status" value="1"/>
</dbReference>
<dbReference type="SUPFAM" id="SSF81648">
    <property type="entry name" value="a domain/subunit of cytochrome bc1 complex (Ubiquinol-cytochrome c reductase)"/>
    <property type="match status" value="1"/>
</dbReference>
<dbReference type="SUPFAM" id="SSF81342">
    <property type="entry name" value="Transmembrane di-heme cytochromes"/>
    <property type="match status" value="1"/>
</dbReference>
<dbReference type="PROSITE" id="PS51003">
    <property type="entry name" value="CYTB_CTER"/>
    <property type="match status" value="1"/>
</dbReference>
<dbReference type="PROSITE" id="PS51002">
    <property type="entry name" value="CYTB_NTER"/>
    <property type="match status" value="1"/>
</dbReference>
<keyword id="KW-0249">Electron transport</keyword>
<keyword id="KW-0349">Heme</keyword>
<keyword id="KW-0408">Iron</keyword>
<keyword id="KW-0472">Membrane</keyword>
<keyword id="KW-0479">Metal-binding</keyword>
<keyword id="KW-0496">Mitochondrion</keyword>
<keyword id="KW-0999">Mitochondrion inner membrane</keyword>
<keyword id="KW-1185">Reference proteome</keyword>
<keyword id="KW-0679">Respiratory chain</keyword>
<keyword id="KW-0812">Transmembrane</keyword>
<keyword id="KW-1133">Transmembrane helix</keyword>
<keyword id="KW-0813">Transport</keyword>
<keyword id="KW-0830">Ubiquinone</keyword>
<name>CYB_SALSA</name>
<comment type="function">
    <text evidence="2">Component of the ubiquinol-cytochrome c reductase complex (complex III or cytochrome b-c1 complex) that is part of the mitochondrial respiratory chain. The b-c1 complex mediates electron transfer from ubiquinol to cytochrome c. Contributes to the generation of a proton gradient across the mitochondrial membrane that is then used for ATP synthesis.</text>
</comment>
<comment type="cofactor">
    <cofactor evidence="2">
        <name>heme b</name>
        <dbReference type="ChEBI" id="CHEBI:60344"/>
    </cofactor>
    <text evidence="2">Binds 2 heme b groups non-covalently.</text>
</comment>
<comment type="subunit">
    <text evidence="2">The cytochrome bc1 complex contains 3 respiratory subunits (MT-CYB, CYC1 and UQCRFS1), 2 core proteins (UQCRC1 and UQCRC2) and probably 6 low-molecular weight proteins.</text>
</comment>
<comment type="subcellular location">
    <subcellularLocation>
        <location evidence="2">Mitochondrion inner membrane</location>
        <topology evidence="2">Multi-pass membrane protein</topology>
    </subcellularLocation>
</comment>
<comment type="miscellaneous">
    <text evidence="1">Heme 1 (or BL or b562) is low-potential and absorbs at about 562 nm, and heme 2 (or BH or b566) is high-potential and absorbs at about 566 nm.</text>
</comment>
<comment type="similarity">
    <text evidence="3 4">Belongs to the cytochrome b family.</text>
</comment>
<comment type="caution">
    <text evidence="2">The full-length protein contains only eight transmembrane helices, not nine as predicted by bioinformatics tools.</text>
</comment>